<evidence type="ECO:0000255" key="1">
    <source>
        <dbReference type="HAMAP-Rule" id="MF_00133"/>
    </source>
</evidence>
<organism>
    <name type="scientific">Streptococcus pneumoniae (strain CGSP14)</name>
    <dbReference type="NCBI Taxonomy" id="516950"/>
    <lineage>
        <taxon>Bacteria</taxon>
        <taxon>Bacillati</taxon>
        <taxon>Bacillota</taxon>
        <taxon>Bacilli</taxon>
        <taxon>Lactobacillales</taxon>
        <taxon>Streptococcaceae</taxon>
        <taxon>Streptococcus</taxon>
    </lineage>
</organism>
<feature type="chain" id="PRO_1000095830" description="Tryptophan synthase beta chain">
    <location>
        <begin position="1"/>
        <end position="407"/>
    </location>
</feature>
<feature type="modified residue" description="N6-(pyridoxal phosphate)lysine" evidence="1">
    <location>
        <position position="91"/>
    </location>
</feature>
<reference key="1">
    <citation type="journal article" date="2009" name="BMC Genomics">
        <title>Genome evolution driven by host adaptations results in a more virulent and antimicrobial-resistant Streptococcus pneumoniae serotype 14.</title>
        <authorList>
            <person name="Ding F."/>
            <person name="Tang P."/>
            <person name="Hsu M.-H."/>
            <person name="Cui P."/>
            <person name="Hu S."/>
            <person name="Yu J."/>
            <person name="Chiu C.-H."/>
        </authorList>
    </citation>
    <scope>NUCLEOTIDE SEQUENCE [LARGE SCALE GENOMIC DNA]</scope>
    <source>
        <strain>CGSP14</strain>
    </source>
</reference>
<protein>
    <recommendedName>
        <fullName evidence="1">Tryptophan synthase beta chain</fullName>
        <ecNumber evidence="1">4.2.1.20</ecNumber>
    </recommendedName>
</protein>
<dbReference type="EC" id="4.2.1.20" evidence="1"/>
<dbReference type="EMBL" id="CP001033">
    <property type="protein sequence ID" value="ACB91048.1"/>
    <property type="molecule type" value="Genomic_DNA"/>
</dbReference>
<dbReference type="RefSeq" id="WP_000331298.1">
    <property type="nucleotide sequence ID" value="NC_010582.1"/>
</dbReference>
<dbReference type="SMR" id="B2ISS1"/>
<dbReference type="KEGG" id="spw:SPCG_1796"/>
<dbReference type="HOGENOM" id="CLU_016734_3_1_9"/>
<dbReference type="UniPathway" id="UPA00035">
    <property type="reaction ID" value="UER00044"/>
</dbReference>
<dbReference type="GO" id="GO:0005737">
    <property type="term" value="C:cytoplasm"/>
    <property type="evidence" value="ECO:0007669"/>
    <property type="project" value="TreeGrafter"/>
</dbReference>
<dbReference type="GO" id="GO:0004834">
    <property type="term" value="F:tryptophan synthase activity"/>
    <property type="evidence" value="ECO:0007669"/>
    <property type="project" value="UniProtKB-UniRule"/>
</dbReference>
<dbReference type="CDD" id="cd06446">
    <property type="entry name" value="Trp-synth_B"/>
    <property type="match status" value="1"/>
</dbReference>
<dbReference type="FunFam" id="3.40.50.1100:FF:000001">
    <property type="entry name" value="Tryptophan synthase beta chain"/>
    <property type="match status" value="1"/>
</dbReference>
<dbReference type="FunFam" id="3.40.50.1100:FF:000004">
    <property type="entry name" value="Tryptophan synthase beta chain"/>
    <property type="match status" value="1"/>
</dbReference>
<dbReference type="Gene3D" id="3.40.50.1100">
    <property type="match status" value="2"/>
</dbReference>
<dbReference type="HAMAP" id="MF_00133">
    <property type="entry name" value="Trp_synth_beta"/>
    <property type="match status" value="1"/>
</dbReference>
<dbReference type="InterPro" id="IPR006653">
    <property type="entry name" value="Trp_synth_b_CS"/>
</dbReference>
<dbReference type="InterPro" id="IPR006654">
    <property type="entry name" value="Trp_synth_beta"/>
</dbReference>
<dbReference type="InterPro" id="IPR023026">
    <property type="entry name" value="Trp_synth_beta/beta-like"/>
</dbReference>
<dbReference type="InterPro" id="IPR001926">
    <property type="entry name" value="TrpB-like_PALP"/>
</dbReference>
<dbReference type="InterPro" id="IPR036052">
    <property type="entry name" value="TrpB-like_PALP_sf"/>
</dbReference>
<dbReference type="NCBIfam" id="TIGR00263">
    <property type="entry name" value="trpB"/>
    <property type="match status" value="1"/>
</dbReference>
<dbReference type="PANTHER" id="PTHR48077:SF3">
    <property type="entry name" value="TRYPTOPHAN SYNTHASE"/>
    <property type="match status" value="1"/>
</dbReference>
<dbReference type="PANTHER" id="PTHR48077">
    <property type="entry name" value="TRYPTOPHAN SYNTHASE-RELATED"/>
    <property type="match status" value="1"/>
</dbReference>
<dbReference type="Pfam" id="PF00291">
    <property type="entry name" value="PALP"/>
    <property type="match status" value="1"/>
</dbReference>
<dbReference type="PIRSF" id="PIRSF001413">
    <property type="entry name" value="Trp_syn_beta"/>
    <property type="match status" value="1"/>
</dbReference>
<dbReference type="SUPFAM" id="SSF53686">
    <property type="entry name" value="Tryptophan synthase beta subunit-like PLP-dependent enzymes"/>
    <property type="match status" value="1"/>
</dbReference>
<dbReference type="PROSITE" id="PS00168">
    <property type="entry name" value="TRP_SYNTHASE_BETA"/>
    <property type="match status" value="1"/>
</dbReference>
<accession>B2ISS1</accession>
<gene>
    <name evidence="1" type="primary">trpB</name>
    <name type="ordered locus">SPCG_1796</name>
</gene>
<name>TRPB_STRPS</name>
<proteinExistence type="inferred from homology"/>
<keyword id="KW-0028">Amino-acid biosynthesis</keyword>
<keyword id="KW-0057">Aromatic amino acid biosynthesis</keyword>
<keyword id="KW-0456">Lyase</keyword>
<keyword id="KW-0663">Pyridoxal phosphate</keyword>
<keyword id="KW-0822">Tryptophan biosynthesis</keyword>
<comment type="function">
    <text evidence="1">The beta subunit is responsible for the synthesis of L-tryptophan from indole and L-serine.</text>
</comment>
<comment type="catalytic activity">
    <reaction evidence="1">
        <text>(1S,2R)-1-C-(indol-3-yl)glycerol 3-phosphate + L-serine = D-glyceraldehyde 3-phosphate + L-tryptophan + H2O</text>
        <dbReference type="Rhea" id="RHEA:10532"/>
        <dbReference type="ChEBI" id="CHEBI:15377"/>
        <dbReference type="ChEBI" id="CHEBI:33384"/>
        <dbReference type="ChEBI" id="CHEBI:57912"/>
        <dbReference type="ChEBI" id="CHEBI:58866"/>
        <dbReference type="ChEBI" id="CHEBI:59776"/>
        <dbReference type="EC" id="4.2.1.20"/>
    </reaction>
</comment>
<comment type="cofactor">
    <cofactor evidence="1">
        <name>pyridoxal 5'-phosphate</name>
        <dbReference type="ChEBI" id="CHEBI:597326"/>
    </cofactor>
</comment>
<comment type="pathway">
    <text evidence="1">Amino-acid biosynthesis; L-tryptophan biosynthesis; L-tryptophan from chorismate: step 5/5.</text>
</comment>
<comment type="subunit">
    <text evidence="1">Tetramer of two alpha and two beta chains.</text>
</comment>
<comment type="similarity">
    <text evidence="1">Belongs to the TrpB family.</text>
</comment>
<sequence length="407" mass="44264">MAYQEPNKDGFYGKFGGRFVPETLMTAVLELEKAYRESQADPSFQEELNQLLRQYVGRETPLYYAKNLTQHIGGAKIYLKREDLNHTGAHKINNALGQVWLAKRMGKKKIIAETGAGQHGVATATAAALFNMECTIYMGEEDVKRQALNVFRMELLGAKVEAVTDGSRVLKDAVNAALRSWVANIDDTHYILGSALGPHPFPEIVRDFQSVIGREAKQQYRDMTGQNLPDALVACVGGGSNAIGLFHPFVEDESVAMYGTEAAGLGVDTEHHAATLTKGRPGVLHGSLMDVLQDAHGQILEAFSISAGLDYPGIGPEHSHYHDIKRASYVPVTDEEALEGFQLLSRVEGIIPALESSHAIAFAVKLAKELGPEKSMIVCLSGRGDKDVVQVKDRLEADAAKKGEAHA</sequence>